<comment type="function">
    <text evidence="1 5 6 7">Plays an active role in transcriptional regulation by binding modified histones H3 and H4 (PubMed:27775714, PubMed:28533407). Is a negative regulator of myeloid differentiation of hematopoietic progenitor cells (PubMed:28533407). Might also have a role in the development and maturation of lymphoid cells (By similarity). Involved in the regulation of non-canonical NF-kappa-B pathway (PubMed:20460684).</text>
</comment>
<comment type="subunit">
    <text evidence="5 7 8">Interacts with the nucleosomes, in particular nucleosomes bearing histone H3 crotonylated at 'Lys-14' (H3K14cr) for which DPF2 has high affinity (PubMed:27775714). Also interacts (via PHD-type zinc finger domains) with histone H3 butyrylated at 'Lys-14' (H3K14bu), histone H3 propionylated at 'Lys-14' (H3K14pr), and histone H3 acetylated at 'Lys-14' (H3K14ac) (PubMed:27775714, PubMed:28533407, PubMed:29429572). Interacts with histone H3 acetylated at 'Lys-9' (H3K9ac), histone H3 di-methylated at 'Lys-9' (H3K9me2), and histone H3 tri-methylated at 'Lys-9' (H3K9me3) (PubMed:29429572). Interacts with histone H4 acetylated at 'Lys-12' (H4K12ac) (PubMed:29429572). Interacts with histone H4 acetylated at 'Lys-16' (H4K16ac) (PubMed:28533407). Interacts with SWI/SNF complex components (PubMed:20460684, PubMed:28533407). Interacts with SMARCA2, SMARCA4, SMARCB1 and SMARCD1 (PubMed:20460684). Interacts with SMARCC1, SMARCC2 and ACTL6A (PubMed:28533407). Interacts with RUNX1 (PubMed:28533407).</text>
</comment>
<comment type="interaction">
    <interactant intactId="EBI-359932">
        <id>Q92785</id>
    </interactant>
    <interactant intactId="EBI-5916454">
        <id>A6NEM1</id>
        <label>GOLGA6L9</label>
    </interactant>
    <organismsDiffer>false</organismsDiffer>
    <experiments>3</experiments>
</comment>
<comment type="interaction">
    <interactant intactId="EBI-359932">
        <id>Q92785</id>
    </interactant>
    <interactant intactId="EBI-7116203">
        <id>O75031</id>
        <label>HSF2BP</label>
    </interactant>
    <organismsDiffer>false</organismsDiffer>
    <experiments>6</experiments>
</comment>
<comment type="interaction">
    <interactant intactId="EBI-359932">
        <id>Q92785</id>
    </interactant>
    <interactant intactId="EBI-740738">
        <id>O95751</id>
        <label>LDOC1</label>
    </interactant>
    <organismsDiffer>false</organismsDiffer>
    <experiments>6</experiments>
</comment>
<comment type="interaction">
    <interactant intactId="EBI-359932">
        <id>Q92785</id>
    </interactant>
    <interactant intactId="EBI-739832">
        <id>Q8TBB1</id>
        <label>LNX1</label>
    </interactant>
    <organismsDiffer>false</organismsDiffer>
    <experiments>3</experiments>
</comment>
<comment type="interaction">
    <interactant intactId="EBI-359932">
        <id>Q92785</id>
    </interactant>
    <interactant intactId="EBI-16439278">
        <id>Q6FHY5</id>
        <label>MEOX2</label>
    </interactant>
    <organismsDiffer>false</organismsDiffer>
    <experiments>3</experiments>
</comment>
<comment type="interaction">
    <interactant intactId="EBI-359932">
        <id>Q92785</id>
    </interactant>
    <interactant intactId="EBI-79165">
        <id>Q9NRD5</id>
        <label>PICK1</label>
    </interactant>
    <organismsDiffer>false</organismsDiffer>
    <experiments>3</experiments>
</comment>
<comment type="interaction">
    <interactant intactId="EBI-359932">
        <id>Q92785</id>
    </interactant>
    <interactant intactId="EBI-726876">
        <id>Q6NUQ1</id>
        <label>RINT1</label>
    </interactant>
    <organismsDiffer>false</organismsDiffer>
    <experiments>3</experiments>
</comment>
<comment type="interaction">
    <interactant intactId="EBI-359932">
        <id>Q92785</id>
    </interactant>
    <interactant intactId="EBI-2952709">
        <id>Q92622</id>
        <label>RUBCN</label>
    </interactant>
    <organismsDiffer>false</organismsDiffer>
    <experiments>3</experiments>
</comment>
<comment type="interaction">
    <interactant intactId="EBI-359932">
        <id>Q92785</id>
    </interactant>
    <interactant intactId="EBI-8656864">
        <id>Q6PF05</id>
        <label>TTC23L</label>
    </interactant>
    <organismsDiffer>false</organismsDiffer>
    <experiments>3</experiments>
</comment>
<comment type="interaction">
    <interactant intactId="EBI-359932">
        <id>Q92785</id>
    </interactant>
    <interactant intactId="EBI-2564581">
        <id>O95881</id>
        <label>TXNDC12</label>
    </interactant>
    <organismsDiffer>false</organismsDiffer>
    <experiments>3</experiments>
</comment>
<comment type="interaction">
    <interactant intactId="EBI-359932">
        <id>Q92785</id>
    </interactant>
    <interactant intactId="EBI-625509">
        <id>Q8N720</id>
        <label>ZNF655</label>
    </interactant>
    <organismsDiffer>false</organismsDiffer>
    <experiments>3</experiments>
</comment>
<comment type="subcellular location">
    <subcellularLocation>
        <location evidence="7 8">Nucleus</location>
    </subcellularLocation>
    <subcellularLocation>
        <location evidence="7">Cytoplasm</location>
    </subcellularLocation>
</comment>
<comment type="alternative products">
    <event type="alternative splicing"/>
    <isoform>
        <id>Q92785-1</id>
        <name>1</name>
        <sequence type="displayed"/>
    </isoform>
    <isoform>
        <id>Q92785-2</id>
        <name>2</name>
        <sequence type="described" ref="VSP_055860"/>
    </isoform>
</comment>
<comment type="tissue specificity">
    <text>Ubiquitous.</text>
</comment>
<comment type="disease" evidence="8">
    <disease id="DI-05275">
        <name>Coffin-Siris syndrome 7</name>
        <acronym>CSS7</acronym>
        <description>A form of Coffin-Siris syndrome, a congenital multiple malformation syndrome with broad phenotypic and genetic variability. Cardinal features are intellectual disability, coarse facial features, hypertrichosis, and hypoplastic or absent fifth digit nails or phalanges. Additional features include malformations of the cardiac, gastrointestinal, genitourinary, and/or central nervous systems. Sucking/feeding difficulties, poor growth, ophthalmologic abnormalities, hearing impairment, and spinal anomalies are common findings. Both autosomal dominant and autosomal recessive inheritance patterns have been reported. CSS7 inheritance is autosomal dominant.</description>
        <dbReference type="MIM" id="618027"/>
    </disease>
    <text>The disease is caused by variants affecting the gene represented in this entry.</text>
</comment>
<comment type="similarity">
    <text evidence="10">Belongs to the requiem/DPF family.</text>
</comment>
<protein>
    <recommendedName>
        <fullName>Zinc finger protein ubi-d4</fullName>
    </recommendedName>
    <alternativeName>
        <fullName>Apoptosis response zinc finger protein</fullName>
    </alternativeName>
    <alternativeName>
        <fullName>BRG1-associated factor 45D</fullName>
        <shortName>BAF45D</shortName>
    </alternativeName>
    <alternativeName>
        <fullName>D4, zinc and double PHD fingers family 2</fullName>
    </alternativeName>
    <alternativeName>
        <fullName>Protein requiem</fullName>
    </alternativeName>
</protein>
<reference key="1">
    <citation type="journal article" date="1997" name="Genome Res.">
        <title>A transcript map for the 2.8-Mb region containing the multiple endocrine neoplasia type 1 locus.</title>
        <authorList>
            <person name="Guru S.C."/>
            <person name="Agarwal S.K."/>
            <person name="Manickam P."/>
            <person name="Olufemi S.-E."/>
            <person name="Crabtree J.S."/>
            <person name="Weisemann J.M."/>
            <person name="Kester M.B."/>
            <person name="Kim Y.S."/>
            <person name="Wang Y."/>
            <person name="Emmert-Buck M.R."/>
            <person name="Liotta L.A."/>
            <person name="Spiegel A.M."/>
            <person name="Boguski M.S."/>
            <person name="Roe B.A."/>
            <person name="Collins F.S."/>
            <person name="Burns A.L."/>
            <person name="Marx S.J."/>
            <person name="Chandrasekharappa S.C."/>
        </authorList>
    </citation>
    <scope>NUCLEOTIDE SEQUENCE [MRNA] (ISOFORM 1)</scope>
</reference>
<reference key="2">
    <citation type="journal article" date="1998" name="Mamm. Genome">
        <title>Expression and chromosomal localization of the Requiem gene.</title>
        <authorList>
            <person name="Gabig T.G."/>
            <person name="Crean C.D."/>
            <person name="Klenk A."/>
            <person name="Long H."/>
            <person name="Copeland N.G."/>
            <person name="Gilbert D.J."/>
            <person name="Jenkins N.A."/>
            <person name="Quincey D."/>
            <person name="Parente F."/>
            <person name="Lespinasse F."/>
            <person name="Carle G.F."/>
            <person name="Gaudray P."/>
            <person name="Zhang C.X."/>
            <person name="Calender A."/>
            <person name="Hoeppener J."/>
            <person name="Kas K."/>
            <person name="Thakker R.V."/>
            <person name="Farnebo F."/>
            <person name="Teh B.T."/>
            <person name="Larsson C."/>
            <person name="Piehl F."/>
            <person name="Lagercrantz J."/>
            <person name="Khodaei S."/>
            <person name="Carson E."/>
            <person name="Weber G."/>
        </authorList>
    </citation>
    <scope>NUCLEOTIDE SEQUENCE [MRNA] (ISOFORM 1)</scope>
</reference>
<reference key="3">
    <citation type="submission" date="2004-10" db="EMBL/GenBank/DDBJ databases">
        <title>Cloning of human full-length CDSs in BD Creator(TM) system donor vector.</title>
        <authorList>
            <person name="Kalnine N."/>
            <person name="Chen X."/>
            <person name="Rolfs A."/>
            <person name="Halleck A."/>
            <person name="Hines L."/>
            <person name="Eisenstein S."/>
            <person name="Koundinya M."/>
            <person name="Raphael J."/>
            <person name="Moreira D."/>
            <person name="Kelley T."/>
            <person name="LaBaer J."/>
            <person name="Lin Y."/>
            <person name="Phelan M."/>
            <person name="Farmer A."/>
        </authorList>
    </citation>
    <scope>NUCLEOTIDE SEQUENCE [LARGE SCALE MRNA] (ISOFORM 1)</scope>
</reference>
<reference key="4">
    <citation type="submission" date="2003-01" db="EMBL/GenBank/DDBJ databases">
        <authorList>
            <consortium name="NIEHS SNPs program"/>
        </authorList>
    </citation>
    <scope>NUCLEOTIDE SEQUENCE [GENOMIC DNA]</scope>
</reference>
<reference key="5">
    <citation type="journal article" date="2004" name="Nat. Genet.">
        <title>Complete sequencing and characterization of 21,243 full-length human cDNAs.</title>
        <authorList>
            <person name="Ota T."/>
            <person name="Suzuki Y."/>
            <person name="Nishikawa T."/>
            <person name="Otsuki T."/>
            <person name="Sugiyama T."/>
            <person name="Irie R."/>
            <person name="Wakamatsu A."/>
            <person name="Hayashi K."/>
            <person name="Sato H."/>
            <person name="Nagai K."/>
            <person name="Kimura K."/>
            <person name="Makita H."/>
            <person name="Sekine M."/>
            <person name="Obayashi M."/>
            <person name="Nishi T."/>
            <person name="Shibahara T."/>
            <person name="Tanaka T."/>
            <person name="Ishii S."/>
            <person name="Yamamoto J."/>
            <person name="Saito K."/>
            <person name="Kawai Y."/>
            <person name="Isono Y."/>
            <person name="Nakamura Y."/>
            <person name="Nagahari K."/>
            <person name="Murakami K."/>
            <person name="Yasuda T."/>
            <person name="Iwayanagi T."/>
            <person name="Wagatsuma M."/>
            <person name="Shiratori A."/>
            <person name="Sudo H."/>
            <person name="Hosoiri T."/>
            <person name="Kaku Y."/>
            <person name="Kodaira H."/>
            <person name="Kondo H."/>
            <person name="Sugawara M."/>
            <person name="Takahashi M."/>
            <person name="Kanda K."/>
            <person name="Yokoi T."/>
            <person name="Furuya T."/>
            <person name="Kikkawa E."/>
            <person name="Omura Y."/>
            <person name="Abe K."/>
            <person name="Kamihara K."/>
            <person name="Katsuta N."/>
            <person name="Sato K."/>
            <person name="Tanikawa M."/>
            <person name="Yamazaki M."/>
            <person name="Ninomiya K."/>
            <person name="Ishibashi T."/>
            <person name="Yamashita H."/>
            <person name="Murakawa K."/>
            <person name="Fujimori K."/>
            <person name="Tanai H."/>
            <person name="Kimata M."/>
            <person name="Watanabe M."/>
            <person name="Hiraoka S."/>
            <person name="Chiba Y."/>
            <person name="Ishida S."/>
            <person name="Ono Y."/>
            <person name="Takiguchi S."/>
            <person name="Watanabe S."/>
            <person name="Yosida M."/>
            <person name="Hotuta T."/>
            <person name="Kusano J."/>
            <person name="Kanehori K."/>
            <person name="Takahashi-Fujii A."/>
            <person name="Hara H."/>
            <person name="Tanase T.-O."/>
            <person name="Nomura Y."/>
            <person name="Togiya S."/>
            <person name="Komai F."/>
            <person name="Hara R."/>
            <person name="Takeuchi K."/>
            <person name="Arita M."/>
            <person name="Imose N."/>
            <person name="Musashino K."/>
            <person name="Yuuki H."/>
            <person name="Oshima A."/>
            <person name="Sasaki N."/>
            <person name="Aotsuka S."/>
            <person name="Yoshikawa Y."/>
            <person name="Matsunawa H."/>
            <person name="Ichihara T."/>
            <person name="Shiohata N."/>
            <person name="Sano S."/>
            <person name="Moriya S."/>
            <person name="Momiyama H."/>
            <person name="Satoh N."/>
            <person name="Takami S."/>
            <person name="Terashima Y."/>
            <person name="Suzuki O."/>
            <person name="Nakagawa S."/>
            <person name="Senoh A."/>
            <person name="Mizoguchi H."/>
            <person name="Goto Y."/>
            <person name="Shimizu F."/>
            <person name="Wakebe H."/>
            <person name="Hishigaki H."/>
            <person name="Watanabe T."/>
            <person name="Sugiyama A."/>
            <person name="Takemoto M."/>
            <person name="Kawakami B."/>
            <person name="Yamazaki M."/>
            <person name="Watanabe K."/>
            <person name="Kumagai A."/>
            <person name="Itakura S."/>
            <person name="Fukuzumi Y."/>
            <person name="Fujimori Y."/>
            <person name="Komiyama M."/>
            <person name="Tashiro H."/>
            <person name="Tanigami A."/>
            <person name="Fujiwara T."/>
            <person name="Ono T."/>
            <person name="Yamada K."/>
            <person name="Fujii Y."/>
            <person name="Ozaki K."/>
            <person name="Hirao M."/>
            <person name="Ohmori Y."/>
            <person name="Kawabata A."/>
            <person name="Hikiji T."/>
            <person name="Kobatake N."/>
            <person name="Inagaki H."/>
            <person name="Ikema Y."/>
            <person name="Okamoto S."/>
            <person name="Okitani R."/>
            <person name="Kawakami T."/>
            <person name="Noguchi S."/>
            <person name="Itoh T."/>
            <person name="Shigeta K."/>
            <person name="Senba T."/>
            <person name="Matsumura K."/>
            <person name="Nakajima Y."/>
            <person name="Mizuno T."/>
            <person name="Morinaga M."/>
            <person name="Sasaki M."/>
            <person name="Togashi T."/>
            <person name="Oyama M."/>
            <person name="Hata H."/>
            <person name="Watanabe M."/>
            <person name="Komatsu T."/>
            <person name="Mizushima-Sugano J."/>
            <person name="Satoh T."/>
            <person name="Shirai Y."/>
            <person name="Takahashi Y."/>
            <person name="Nakagawa K."/>
            <person name="Okumura K."/>
            <person name="Nagase T."/>
            <person name="Nomura N."/>
            <person name="Kikuchi H."/>
            <person name="Masuho Y."/>
            <person name="Yamashita R."/>
            <person name="Nakai K."/>
            <person name="Yada T."/>
            <person name="Nakamura Y."/>
            <person name="Ohara O."/>
            <person name="Isogai T."/>
            <person name="Sugano S."/>
        </authorList>
    </citation>
    <scope>NUCLEOTIDE SEQUENCE [LARGE SCALE MRNA] (ISOFORMS 1 AND 2)</scope>
    <source>
        <tissue>Pericardium</tissue>
    </source>
</reference>
<reference key="6">
    <citation type="journal article" date="2006" name="Nature">
        <title>Human chromosome 11 DNA sequence and analysis including novel gene identification.</title>
        <authorList>
            <person name="Taylor T.D."/>
            <person name="Noguchi H."/>
            <person name="Totoki Y."/>
            <person name="Toyoda A."/>
            <person name="Kuroki Y."/>
            <person name="Dewar K."/>
            <person name="Lloyd C."/>
            <person name="Itoh T."/>
            <person name="Takeda T."/>
            <person name="Kim D.-W."/>
            <person name="She X."/>
            <person name="Barlow K.F."/>
            <person name="Bloom T."/>
            <person name="Bruford E."/>
            <person name="Chang J.L."/>
            <person name="Cuomo C.A."/>
            <person name="Eichler E."/>
            <person name="FitzGerald M.G."/>
            <person name="Jaffe D.B."/>
            <person name="LaButti K."/>
            <person name="Nicol R."/>
            <person name="Park H.-S."/>
            <person name="Seaman C."/>
            <person name="Sougnez C."/>
            <person name="Yang X."/>
            <person name="Zimmer A.R."/>
            <person name="Zody M.C."/>
            <person name="Birren B.W."/>
            <person name="Nusbaum C."/>
            <person name="Fujiyama A."/>
            <person name="Hattori M."/>
            <person name="Rogers J."/>
            <person name="Lander E.S."/>
            <person name="Sakaki Y."/>
        </authorList>
    </citation>
    <scope>NUCLEOTIDE SEQUENCE [LARGE SCALE GENOMIC DNA]</scope>
</reference>
<reference key="7">
    <citation type="submission" date="2005-07" db="EMBL/GenBank/DDBJ databases">
        <authorList>
            <person name="Mural R.J."/>
            <person name="Istrail S."/>
            <person name="Sutton G.G."/>
            <person name="Florea L."/>
            <person name="Halpern A.L."/>
            <person name="Mobarry C.M."/>
            <person name="Lippert R."/>
            <person name="Walenz B."/>
            <person name="Shatkay H."/>
            <person name="Dew I."/>
            <person name="Miller J.R."/>
            <person name="Flanigan M.J."/>
            <person name="Edwards N.J."/>
            <person name="Bolanos R."/>
            <person name="Fasulo D."/>
            <person name="Halldorsson B.V."/>
            <person name="Hannenhalli S."/>
            <person name="Turner R."/>
            <person name="Yooseph S."/>
            <person name="Lu F."/>
            <person name="Nusskern D.R."/>
            <person name="Shue B.C."/>
            <person name="Zheng X.H."/>
            <person name="Zhong F."/>
            <person name="Delcher A.L."/>
            <person name="Huson D.H."/>
            <person name="Kravitz S.A."/>
            <person name="Mouchard L."/>
            <person name="Reinert K."/>
            <person name="Remington K.A."/>
            <person name="Clark A.G."/>
            <person name="Waterman M.S."/>
            <person name="Eichler E.E."/>
            <person name="Adams M.D."/>
            <person name="Hunkapiller M.W."/>
            <person name="Myers E.W."/>
            <person name="Venter J.C."/>
        </authorList>
    </citation>
    <scope>NUCLEOTIDE SEQUENCE [LARGE SCALE GENOMIC DNA]</scope>
</reference>
<reference key="8">
    <citation type="journal article" date="2004" name="Genome Res.">
        <title>The status, quality, and expansion of the NIH full-length cDNA project: the Mammalian Gene Collection (MGC).</title>
        <authorList>
            <consortium name="The MGC Project Team"/>
        </authorList>
    </citation>
    <scope>NUCLEOTIDE SEQUENCE [LARGE SCALE MRNA] (ISOFORM 1)</scope>
    <source>
        <tissue>Uterus</tissue>
    </source>
</reference>
<reference key="9">
    <citation type="journal article" date="1996" name="Genomics">
        <title>The d4 gene family in the human genome.</title>
        <authorList>
            <person name="Chestkov A.V."/>
            <person name="Baka I.D."/>
            <person name="Kost M.V."/>
            <person name="Georgiev G.P."/>
            <person name="Buchman V.L."/>
        </authorList>
    </citation>
    <scope>NUCLEOTIDE SEQUENCE [GENOMIC DNA] OF 12-64</scope>
</reference>
<reference key="10">
    <citation type="journal article" date="2008" name="Proc. Natl. Acad. Sci. U.S.A.">
        <title>A quantitative atlas of mitotic phosphorylation.</title>
        <authorList>
            <person name="Dephoure N."/>
            <person name="Zhou C."/>
            <person name="Villen J."/>
            <person name="Beausoleil S.A."/>
            <person name="Bakalarski C.E."/>
            <person name="Elledge S.J."/>
            <person name="Gygi S.P."/>
        </authorList>
    </citation>
    <scope>PHOSPHORYLATION [LARGE SCALE ANALYSIS] AT SER-142 AND THR-176</scope>
    <scope>IDENTIFICATION BY MASS SPECTROMETRY [LARGE SCALE ANALYSIS]</scope>
    <source>
        <tissue>Cervix carcinoma</tissue>
    </source>
</reference>
<reference key="11">
    <citation type="journal article" date="2009" name="Anal. Chem.">
        <title>Lys-N and trypsin cover complementary parts of the phosphoproteome in a refined SCX-based approach.</title>
        <authorList>
            <person name="Gauci S."/>
            <person name="Helbig A.O."/>
            <person name="Slijper M."/>
            <person name="Krijgsveld J."/>
            <person name="Heck A.J."/>
            <person name="Mohammed S."/>
        </authorList>
    </citation>
    <scope>ACETYLATION [LARGE SCALE ANALYSIS] AT ALA-2</scope>
    <scope>CLEAVAGE OF INITIATOR METHIONINE [LARGE SCALE ANALYSIS]</scope>
    <scope>IDENTIFICATION BY MASS SPECTROMETRY [LARGE SCALE ANALYSIS]</scope>
</reference>
<reference key="12">
    <citation type="journal article" date="2009" name="Sci. Signal.">
        <title>Quantitative phosphoproteomic analysis of T cell receptor signaling reveals system-wide modulation of protein-protein interactions.</title>
        <authorList>
            <person name="Mayya V."/>
            <person name="Lundgren D.H."/>
            <person name="Hwang S.-I."/>
            <person name="Rezaul K."/>
            <person name="Wu L."/>
            <person name="Eng J.K."/>
            <person name="Rodionov V."/>
            <person name="Han D.K."/>
        </authorList>
    </citation>
    <scope>PHOSPHORYLATION [LARGE SCALE ANALYSIS] AT SER-142; TYR-172 AND THR-176</scope>
    <scope>IDENTIFICATION BY MASS SPECTROMETRY [LARGE SCALE ANALYSIS]</scope>
    <source>
        <tissue>Leukemic T-cell</tissue>
    </source>
</reference>
<reference key="13">
    <citation type="journal article" date="2010" name="J. Biol. Chem.">
        <title>Requiem protein links RelB/p52 and the Brm-type SWI/SNF complex in a noncanonical NF-kappaB pathway.</title>
        <authorList>
            <person name="Tando T."/>
            <person name="Ishizaka A."/>
            <person name="Watanabe H."/>
            <person name="Ito T."/>
            <person name="Iida S."/>
            <person name="Haraguchi T."/>
            <person name="Mizutani T."/>
            <person name="Izumi T."/>
            <person name="Isobe T."/>
            <person name="Akiyama T."/>
            <person name="Inoue J."/>
            <person name="Iba H."/>
        </authorList>
    </citation>
    <scope>FUNCTION</scope>
    <scope>INTERACTION WITH SMARCA2; SMARCA4; SMARCB1 AND SMARCB1</scope>
</reference>
<reference key="14">
    <citation type="journal article" date="2010" name="Sci. Signal.">
        <title>Quantitative phosphoproteomics reveals widespread full phosphorylation site occupancy during mitosis.</title>
        <authorList>
            <person name="Olsen J.V."/>
            <person name="Vermeulen M."/>
            <person name="Santamaria A."/>
            <person name="Kumar C."/>
            <person name="Miller M.L."/>
            <person name="Jensen L.J."/>
            <person name="Gnad F."/>
            <person name="Cox J."/>
            <person name="Jensen T.S."/>
            <person name="Nigg E.A."/>
            <person name="Brunak S."/>
            <person name="Mann M."/>
        </authorList>
    </citation>
    <scope>PHOSPHORYLATION [LARGE SCALE ANALYSIS] AT SER-142; THR-176 AND SER-200</scope>
    <scope>IDENTIFICATION BY MASS SPECTROMETRY [LARGE SCALE ANALYSIS]</scope>
    <source>
        <tissue>Cervix carcinoma</tissue>
    </source>
</reference>
<reference key="15">
    <citation type="journal article" date="2011" name="BMC Syst. Biol.">
        <title>Initial characterization of the human central proteome.</title>
        <authorList>
            <person name="Burkard T.R."/>
            <person name="Planyavsky M."/>
            <person name="Kaupe I."/>
            <person name="Breitwieser F.P."/>
            <person name="Buerckstuemmer T."/>
            <person name="Bennett K.L."/>
            <person name="Superti-Furga G."/>
            <person name="Colinge J."/>
        </authorList>
    </citation>
    <scope>IDENTIFICATION BY MASS SPECTROMETRY [LARGE SCALE ANALYSIS]</scope>
</reference>
<reference key="16">
    <citation type="journal article" date="2011" name="Sci. Signal.">
        <title>System-wide temporal characterization of the proteome and phosphoproteome of human embryonic stem cell differentiation.</title>
        <authorList>
            <person name="Rigbolt K.T."/>
            <person name="Prokhorova T.A."/>
            <person name="Akimov V."/>
            <person name="Henningsen J."/>
            <person name="Johansen P.T."/>
            <person name="Kratchmarova I."/>
            <person name="Kassem M."/>
            <person name="Mann M."/>
            <person name="Olsen J.V."/>
            <person name="Blagoev B."/>
        </authorList>
    </citation>
    <scope>PHOSPHORYLATION [LARGE SCALE ANALYSIS] AT SER-142; THR-176 AND SER-244</scope>
    <scope>IDENTIFICATION BY MASS SPECTROMETRY [LARGE SCALE ANALYSIS]</scope>
</reference>
<reference key="17">
    <citation type="journal article" date="2013" name="J. Proteome Res.">
        <title>Toward a comprehensive characterization of a human cancer cell phosphoproteome.</title>
        <authorList>
            <person name="Zhou H."/>
            <person name="Di Palma S."/>
            <person name="Preisinger C."/>
            <person name="Peng M."/>
            <person name="Polat A.N."/>
            <person name="Heck A.J."/>
            <person name="Mohammed S."/>
        </authorList>
    </citation>
    <scope>PHOSPHORYLATION [LARGE SCALE ANALYSIS] AT SER-142; THR-176; SER-200 AND SER-280</scope>
    <scope>IDENTIFICATION BY MASS SPECTROMETRY [LARGE SCALE ANALYSIS]</scope>
    <source>
        <tissue>Cervix carcinoma</tissue>
        <tissue>Erythroleukemia</tissue>
    </source>
</reference>
<reference key="18">
    <citation type="journal article" date="2014" name="J. Proteomics">
        <title>An enzyme assisted RP-RPLC approach for in-depth analysis of human liver phosphoproteome.</title>
        <authorList>
            <person name="Bian Y."/>
            <person name="Song C."/>
            <person name="Cheng K."/>
            <person name="Dong M."/>
            <person name="Wang F."/>
            <person name="Huang J."/>
            <person name="Sun D."/>
            <person name="Wang L."/>
            <person name="Ye M."/>
            <person name="Zou H."/>
        </authorList>
    </citation>
    <scope>IDENTIFICATION BY MASS SPECTROMETRY [LARGE SCALE ANALYSIS]</scope>
    <source>
        <tissue>Liver</tissue>
    </source>
</reference>
<reference key="19">
    <citation type="journal article" date="2014" name="Nat. Struct. Mol. Biol.">
        <title>Uncovering global SUMOylation signaling networks in a site-specific manner.</title>
        <authorList>
            <person name="Hendriks I.A."/>
            <person name="D'Souza R.C."/>
            <person name="Yang B."/>
            <person name="Verlaan-de Vries M."/>
            <person name="Mann M."/>
            <person name="Vertegaal A.C."/>
        </authorList>
    </citation>
    <scope>SUMOYLATION [LARGE SCALE ANALYSIS] AT LYS-99 AND LYS-107</scope>
    <scope>IDENTIFICATION BY MASS SPECTROMETRY [LARGE SCALE ANALYSIS]</scope>
</reference>
<reference key="20">
    <citation type="journal article" date="2015" name="Cell Rep.">
        <title>SUMO-2 orchestrates chromatin modifiers in response to DNA damage.</title>
        <authorList>
            <person name="Hendriks I.A."/>
            <person name="Treffers L.W."/>
            <person name="Verlaan-de Vries M."/>
            <person name="Olsen J.V."/>
            <person name="Vertegaal A.C."/>
        </authorList>
    </citation>
    <scope>SUMOYLATION [LARGE SCALE ANALYSIS] AT LYS-10</scope>
    <scope>IDENTIFICATION BY MASS SPECTROMETRY [LARGE SCALE ANALYSIS]</scope>
</reference>
<reference key="21">
    <citation type="journal article" date="2015" name="Mol. Cell. Proteomics">
        <title>System-wide analysis of SUMOylation dynamics in response to replication stress reveals novel small ubiquitin-like modified target proteins and acceptor lysines relevant for genome stability.</title>
        <authorList>
            <person name="Xiao Z."/>
            <person name="Chang J.G."/>
            <person name="Hendriks I.A."/>
            <person name="Sigurdsson J.O."/>
            <person name="Olsen J.V."/>
            <person name="Vertegaal A.C."/>
        </authorList>
    </citation>
    <scope>SUMOYLATION [LARGE SCALE ANALYSIS] AT LYS-99 AND LYS-107</scope>
    <scope>IDENTIFICATION BY MASS SPECTROMETRY [LARGE SCALE ANALYSIS]</scope>
</reference>
<reference key="22">
    <citation type="journal article" date="2017" name="Nat. Struct. Mol. Biol.">
        <title>Site-specific mapping of the human SUMO proteome reveals co-modification with phosphorylation.</title>
        <authorList>
            <person name="Hendriks I.A."/>
            <person name="Lyon D."/>
            <person name="Young C."/>
            <person name="Jensen L.J."/>
            <person name="Vertegaal A.C."/>
            <person name="Nielsen M.L."/>
        </authorList>
    </citation>
    <scope>SUMOYLATION [LARGE SCALE ANALYSIS] AT LYS-10; LYS-99; LYS-107; LYS-108; LYS-178; LYS-196 AND LYS-281</scope>
    <scope>IDENTIFICATION BY MASS SPECTROMETRY [LARGE SCALE ANALYSIS]</scope>
</reference>
<reference key="23">
    <citation type="journal article" date="2018" name="Am. J. Hum. Genet.">
        <title>Mutations in the BAF-complex subunit DPF2 are associated with Coffin-Siris syndrome.</title>
        <authorList>
            <consortium name="Deciphering Developmental Disorders Study"/>
            <person name="Vasileiou G."/>
            <person name="Vergarajauregui S."/>
            <person name="Endele S."/>
            <person name="Popp B."/>
            <person name="Buettner C."/>
            <person name="Ekici A.B."/>
            <person name="Gerard M."/>
            <person name="Bramswig N.C."/>
            <person name="Albrecht B."/>
            <person name="Clayton-Smith J."/>
            <person name="Morton J."/>
            <person name="Tomkins S."/>
            <person name="Low K."/>
            <person name="Weber A."/>
            <person name="Wenzel M."/>
            <person name="Altmueller J."/>
            <person name="Li Y."/>
            <person name="Wollnik B."/>
            <person name="Hoganson G."/>
            <person name="Plona M.R."/>
            <person name="Cho M.T."/>
            <person name="Thiel C.T."/>
            <person name="Luedecke H.J."/>
            <person name="Strom T.M."/>
            <person name="Calpena E."/>
            <person name="Wilkie A.O.M."/>
            <person name="Wieczorek D."/>
            <person name="Engel F.B."/>
            <person name="Reis A."/>
        </authorList>
    </citation>
    <scope>SUBUNIT</scope>
    <scope>SUBCELLULAR LOCATION</scope>
    <scope>INVOLVEMENT IN CSS7</scope>
    <scope>VARIANTS CSS7 PHE-276; TRP-330; GLY-346; HIS-350 AND ARG-369</scope>
    <scope>CHARACTERIZATION OF VARIANTS CSS7 PHE-276; TRP-330 AND HIS-350</scope>
</reference>
<reference key="24">
    <citation type="journal article" date="2011" name="Biochem. Biophys. Res. Commun.">
        <title>Crystal structure of the Cys2His2-type zinc finger domain of human DPF2.</title>
        <authorList>
            <person name="Zhang W."/>
            <person name="Xu C."/>
            <person name="Bian C."/>
            <person name="Tempel W."/>
            <person name="Crombet L."/>
            <person name="MacKenzie F."/>
            <person name="Min J."/>
            <person name="Liu Z."/>
            <person name="Qi C."/>
        </authorList>
    </citation>
    <scope>X-RAY CRYSTALLOGRAPHY (1.80 ANGSTROMS) OF 203-249</scope>
</reference>
<reference key="25">
    <citation type="journal article" date="2016" name="Nat. Chem. Biol.">
        <title>Selective recognition of histone crotonylation by double PHD fingers of MOZ and DPF2.</title>
        <authorList>
            <person name="Xiong X."/>
            <person name="Panchenko T."/>
            <person name="Yang S."/>
            <person name="Zhao S."/>
            <person name="Yan P."/>
            <person name="Zhang W."/>
            <person name="Xie W."/>
            <person name="Li Y."/>
            <person name="Zhao Y."/>
            <person name="Allis C.D."/>
            <person name="Li H."/>
        </authorList>
    </citation>
    <scope>X-RAY CRYSTALLOGRAPHY (2.60 ANGSTROMS) OF 270-391</scope>
    <scope>FUNCTION</scope>
    <scope>SUBUNIT</scope>
    <scope>INTERACTION WITH NUCLEOSOMES</scope>
</reference>
<reference key="26">
    <citation type="journal article" date="2017" name="Proc. Natl. Acad. Sci. U.S.A.">
        <title>Histone-binding of DPF2 mediates its repressive role in myeloid differentiation.</title>
        <authorList>
            <person name="Huber F.M."/>
            <person name="Greenblatt S.M."/>
            <person name="Davenport A.M."/>
            <person name="Martinez C."/>
            <person name="Xu Y."/>
            <person name="Vu L.P."/>
            <person name="Nimer S.D."/>
            <person name="Hoelz A."/>
        </authorList>
    </citation>
    <scope>X-RAY CRYSTALLOGRAPHY (1.6 ANGSTROMS) OF 270-391</scope>
    <scope>FUNCTION</scope>
    <scope>SUBCELLULAR LOCATION</scope>
    <scope>SUBUNIT</scope>
    <scope>INTERACTION WITH SMARCC1; SMARCC2; ACTL6A AND RUNX1</scope>
    <scope>MUTAGENESIS OF PHE-275; ARG-300 AND ASP-346</scope>
</reference>
<gene>
    <name type="primary">DPF2</name>
    <name type="synonym">BAF45D</name>
    <name type="synonym">REQ</name>
    <name type="synonym">UBID4</name>
</gene>
<organism>
    <name type="scientific">Homo sapiens</name>
    <name type="common">Human</name>
    <dbReference type="NCBI Taxonomy" id="9606"/>
    <lineage>
        <taxon>Eukaryota</taxon>
        <taxon>Metazoa</taxon>
        <taxon>Chordata</taxon>
        <taxon>Craniata</taxon>
        <taxon>Vertebrata</taxon>
        <taxon>Euteleostomi</taxon>
        <taxon>Mammalia</taxon>
        <taxon>Eutheria</taxon>
        <taxon>Euarchontoglires</taxon>
        <taxon>Primates</taxon>
        <taxon>Haplorrhini</taxon>
        <taxon>Catarrhini</taxon>
        <taxon>Hominidae</taxon>
        <taxon>Homo</taxon>
    </lineage>
</organism>
<sequence length="391" mass="44155">MAAVVENVVKLLGEQYYKDAMEQCHNYNARLCAERSVRLPFLDSQTGVAQSNCYIWMEKRHRGPGLASGQLYSYPARRWRKKRRAHPPEDPRLSFPSIKPDTDQTLKKEGLISQDGSSLEALLRTDPLEKRGAPDPRVDDDSLGEFPVTNSRARKRILEPDDFLDDLDDEDYEEDTPKRRGKGKSKGKGVGSARKKLDASILEDRDKPYACDICGKRYKNRPGLSYHYAHSHLAEEEGEDKEDSQPPTPVSQRSEEQKSKKGPDGLALPNNYCDFCLGDSKINKKTGQPEELVSCSDCGRSGHPSCLQFTPVMMAAVKTYRWQCIECKCCNICGTSENDDQLLFCDDCDRGYHMYCLTPSMSEPPEGSWSCHLCLDLLKEKASIYQNQNSS</sequence>
<evidence type="ECO:0000250" key="1">
    <source>
        <dbReference type="UniProtKB" id="Q61103"/>
    </source>
</evidence>
<evidence type="ECO:0000255" key="2">
    <source>
        <dbReference type="PROSITE-ProRule" id="PRU00042"/>
    </source>
</evidence>
<evidence type="ECO:0000255" key="3">
    <source>
        <dbReference type="PROSITE-ProRule" id="PRU00146"/>
    </source>
</evidence>
<evidence type="ECO:0000256" key="4">
    <source>
        <dbReference type="SAM" id="MobiDB-lite"/>
    </source>
</evidence>
<evidence type="ECO:0000269" key="5">
    <source>
    </source>
</evidence>
<evidence type="ECO:0000269" key="6">
    <source>
    </source>
</evidence>
<evidence type="ECO:0000269" key="7">
    <source>
    </source>
</evidence>
<evidence type="ECO:0000269" key="8">
    <source>
    </source>
</evidence>
<evidence type="ECO:0000303" key="9">
    <source>
    </source>
</evidence>
<evidence type="ECO:0000305" key="10"/>
<evidence type="ECO:0007744" key="11">
    <source>
    </source>
</evidence>
<evidence type="ECO:0007744" key="12">
    <source>
    </source>
</evidence>
<evidence type="ECO:0007744" key="13">
    <source>
    </source>
</evidence>
<evidence type="ECO:0007744" key="14">
    <source>
    </source>
</evidence>
<evidence type="ECO:0007744" key="15">
    <source>
    </source>
</evidence>
<evidence type="ECO:0007744" key="16">
    <source>
    </source>
</evidence>
<evidence type="ECO:0007744" key="17">
    <source>
    </source>
</evidence>
<evidence type="ECO:0007744" key="18">
    <source>
    </source>
</evidence>
<evidence type="ECO:0007744" key="19">
    <source>
    </source>
</evidence>
<evidence type="ECO:0007744" key="20">
    <source>
    </source>
</evidence>
<evidence type="ECO:0007829" key="21">
    <source>
        <dbReference type="PDB" id="3IUF"/>
    </source>
</evidence>
<evidence type="ECO:0007829" key="22">
    <source>
        <dbReference type="PDB" id="5VDC"/>
    </source>
</evidence>
<evidence type="ECO:0007829" key="23">
    <source>
        <dbReference type="PDB" id="6LTH"/>
    </source>
</evidence>
<feature type="initiator methionine" description="Removed" evidence="12">
    <location>
        <position position="1"/>
    </location>
</feature>
<feature type="chain" id="PRO_0000168149" description="Zinc finger protein ubi-d4">
    <location>
        <begin position="2"/>
        <end position="391"/>
    </location>
</feature>
<feature type="zinc finger region" description="C2H2-type" evidence="2">
    <location>
        <begin position="209"/>
        <end position="232"/>
    </location>
</feature>
<feature type="zinc finger region" description="PHD-type 1" evidence="3">
    <location>
        <begin position="270"/>
        <end position="330"/>
    </location>
</feature>
<feature type="zinc finger region" description="PHD-type 2" evidence="3">
    <location>
        <begin position="327"/>
        <end position="377"/>
    </location>
</feature>
<feature type="region of interest" description="Disordered" evidence="4">
    <location>
        <begin position="79"/>
        <end position="146"/>
    </location>
</feature>
<feature type="region of interest" description="Disordered" evidence="4">
    <location>
        <begin position="165"/>
        <end position="196"/>
    </location>
</feature>
<feature type="region of interest" description="Disordered" evidence="4">
    <location>
        <begin position="233"/>
        <end position="266"/>
    </location>
</feature>
<feature type="compositionally biased region" description="Basic and acidic residues" evidence="4">
    <location>
        <begin position="100"/>
        <end position="110"/>
    </location>
</feature>
<feature type="compositionally biased region" description="Basic and acidic residues" evidence="4">
    <location>
        <begin position="126"/>
        <end position="140"/>
    </location>
</feature>
<feature type="compositionally biased region" description="Acidic residues" evidence="4">
    <location>
        <begin position="165"/>
        <end position="174"/>
    </location>
</feature>
<feature type="compositionally biased region" description="Basic and acidic residues" evidence="4">
    <location>
        <begin position="253"/>
        <end position="263"/>
    </location>
</feature>
<feature type="modified residue" description="N-acetylalanine" evidence="12">
    <location>
        <position position="2"/>
    </location>
</feature>
<feature type="modified residue" description="Phosphoserine" evidence="11 13 14 15 16">
    <location>
        <position position="142"/>
    </location>
</feature>
<feature type="modified residue" description="Phosphotyrosine" evidence="13">
    <location>
        <position position="172"/>
    </location>
</feature>
<feature type="modified residue" description="Phosphothreonine" evidence="11 13 14 15 16">
    <location>
        <position position="176"/>
    </location>
</feature>
<feature type="modified residue" description="Phosphoserine" evidence="14 16">
    <location>
        <position position="200"/>
    </location>
</feature>
<feature type="modified residue" description="Phosphoserine" evidence="15">
    <location>
        <position position="244"/>
    </location>
</feature>
<feature type="modified residue" description="Phosphoserine" evidence="16">
    <location>
        <position position="280"/>
    </location>
</feature>
<feature type="cross-link" description="Glycyl lysine isopeptide (Lys-Gly) (interchain with G-Cter in SUMO2)" evidence="19 20">
    <location>
        <position position="10"/>
    </location>
</feature>
<feature type="cross-link" description="Glycyl lysine isopeptide (Lys-Gly) (interchain with G-Cter in SUMO2)" evidence="17 18 20">
    <location>
        <position position="99"/>
    </location>
</feature>
<feature type="cross-link" description="Glycyl lysine isopeptide (Lys-Gly) (interchain with G-Cter in SUMO2)" evidence="17 18 20">
    <location>
        <position position="107"/>
    </location>
</feature>
<feature type="cross-link" description="Glycyl lysine isopeptide (Lys-Gly) (interchain with G-Cter in SUMO2)" evidence="20">
    <location>
        <position position="108"/>
    </location>
</feature>
<feature type="cross-link" description="Glycyl lysine isopeptide (Lys-Gly) (interchain with G-Cter in SUMO2)" evidence="20">
    <location>
        <position position="178"/>
    </location>
</feature>
<feature type="cross-link" description="Glycyl lysine isopeptide (Lys-Gly) (interchain with G-Cter in SUMO2)" evidence="20">
    <location>
        <position position="196"/>
    </location>
</feature>
<feature type="cross-link" description="Glycyl lysine isopeptide (Lys-Gly) (interchain with G-Cter in SUMO2)" evidence="20">
    <location>
        <position position="281"/>
    </location>
</feature>
<feature type="splice variant" id="VSP_055860" description="In isoform 2." evidence="9">
    <location>
        <begin position="156"/>
        <end position="339"/>
    </location>
</feature>
<feature type="sequence variant" id="VAR_081047" description="In CSS7; abolishes interaction with acetylated or methylated histone H3; dbSNP:rs1555031372." evidence="8">
    <original>C</original>
    <variation>F</variation>
    <location>
        <position position="276"/>
    </location>
</feature>
<feature type="sequence variant" id="VAR_081048" description="In CSS7; abolishes interaction with acetylated or methylated histone H3; dbSNP:rs1555031500." evidence="8">
    <original>C</original>
    <variation>W</variation>
    <location>
        <position position="330"/>
    </location>
</feature>
<feature type="sequence variant" id="VAR_081049" description="In CSS7; dbSNP:rs1555032044." evidence="8">
    <original>D</original>
    <variation>G</variation>
    <location>
        <position position="346"/>
    </location>
</feature>
<feature type="sequence variant" id="VAR_081050" description="In CSS7; abolishes interaction with acetylated histone H3; strongly decreased interaction with methylated histone H3; dbSNP:rs1555032051." evidence="8">
    <original>R</original>
    <variation>H</variation>
    <location>
        <position position="350"/>
    </location>
</feature>
<feature type="sequence variant" id="VAR_081051" description="In CSS7." evidence="8">
    <original>W</original>
    <variation>R</variation>
    <location>
        <position position="369"/>
    </location>
</feature>
<feature type="mutagenesis site" description="Strongly decreased interaction with histones H3 and H4 and loss of function; when associated with A-300 and A-346." evidence="7">
    <original>F</original>
    <variation>A</variation>
    <location>
        <position position="275"/>
    </location>
</feature>
<feature type="mutagenesis site" description="Strongly decreased interaction with histones H3 and H4 and loss of function; when associated with A-275 and A-346." evidence="7">
    <original>R</original>
    <variation>A</variation>
    <location>
        <position position="300"/>
    </location>
</feature>
<feature type="mutagenesis site" description="Strongly decreased interaction with histones H3 and H4 and loss of function; when associated with A-275 and A-300." evidence="7">
    <original>D</original>
    <variation>A</variation>
    <location>
        <position position="346"/>
    </location>
</feature>
<feature type="helix" evidence="23">
    <location>
        <begin position="14"/>
        <end position="37"/>
    </location>
</feature>
<feature type="strand" evidence="23">
    <location>
        <begin position="40"/>
        <end position="42"/>
    </location>
</feature>
<feature type="strand" evidence="23">
    <location>
        <begin position="44"/>
        <end position="46"/>
    </location>
</feature>
<feature type="strand" evidence="23">
    <location>
        <begin position="49"/>
        <end position="52"/>
    </location>
</feature>
<feature type="helix" evidence="23">
    <location>
        <begin position="59"/>
        <end position="61"/>
    </location>
</feature>
<feature type="strand" evidence="23">
    <location>
        <begin position="70"/>
        <end position="73"/>
    </location>
</feature>
<feature type="turn" evidence="21">
    <location>
        <begin position="204"/>
        <end position="206"/>
    </location>
</feature>
<feature type="turn" evidence="21">
    <location>
        <begin position="212"/>
        <end position="214"/>
    </location>
</feature>
<feature type="strand" evidence="21">
    <location>
        <begin position="217"/>
        <end position="220"/>
    </location>
</feature>
<feature type="helix" evidence="21">
    <location>
        <begin position="221"/>
        <end position="230"/>
    </location>
</feature>
<feature type="turn" evidence="22">
    <location>
        <begin position="274"/>
        <end position="276"/>
    </location>
</feature>
<feature type="turn" evidence="22">
    <location>
        <begin position="284"/>
        <end position="286"/>
    </location>
</feature>
<feature type="turn" evidence="22">
    <location>
        <begin position="296"/>
        <end position="298"/>
    </location>
</feature>
<feature type="turn" evidence="22">
    <location>
        <begin position="304"/>
        <end position="308"/>
    </location>
</feature>
<feature type="helix" evidence="22">
    <location>
        <begin position="311"/>
        <end position="316"/>
    </location>
</feature>
<feature type="turn" evidence="22">
    <location>
        <begin position="317"/>
        <end position="321"/>
    </location>
</feature>
<feature type="turn" evidence="22">
    <location>
        <begin position="325"/>
        <end position="327"/>
    </location>
</feature>
<feature type="turn" evidence="22">
    <location>
        <begin position="331"/>
        <end position="333"/>
    </location>
</feature>
<feature type="helix" evidence="22">
    <location>
        <begin position="339"/>
        <end position="341"/>
    </location>
</feature>
<feature type="strand" evidence="22">
    <location>
        <begin position="342"/>
        <end position="344"/>
    </location>
</feature>
<feature type="turn" evidence="22">
    <location>
        <begin position="346"/>
        <end position="348"/>
    </location>
</feature>
<feature type="strand" evidence="22">
    <location>
        <begin position="351"/>
        <end position="353"/>
    </location>
</feature>
<feature type="turn" evidence="22">
    <location>
        <begin position="354"/>
        <end position="356"/>
    </location>
</feature>
<feature type="strand" evidence="22">
    <location>
        <begin position="357"/>
        <end position="359"/>
    </location>
</feature>
<feature type="helix" evidence="22">
    <location>
        <begin position="372"/>
        <end position="378"/>
    </location>
</feature>
<feature type="helix" evidence="22">
    <location>
        <begin position="379"/>
        <end position="381"/>
    </location>
</feature>
<name>REQU_HUMAN</name>
<dbReference type="EMBL" id="AF001433">
    <property type="protein sequence ID" value="AAB81203.1"/>
    <property type="molecule type" value="mRNA"/>
</dbReference>
<dbReference type="EMBL" id="U94585">
    <property type="protein sequence ID" value="AAB58307.1"/>
    <property type="molecule type" value="mRNA"/>
</dbReference>
<dbReference type="EMBL" id="BT006718">
    <property type="protein sequence ID" value="AAP35364.1"/>
    <property type="molecule type" value="mRNA"/>
</dbReference>
<dbReference type="EMBL" id="AY220877">
    <property type="protein sequence ID" value="AAO26041.1"/>
    <property type="molecule type" value="Genomic_DNA"/>
</dbReference>
<dbReference type="EMBL" id="AK291944">
    <property type="protein sequence ID" value="BAF84633.1"/>
    <property type="molecule type" value="mRNA"/>
</dbReference>
<dbReference type="EMBL" id="AK300061">
    <property type="protein sequence ID" value="BAG61870.1"/>
    <property type="molecule type" value="mRNA"/>
</dbReference>
<dbReference type="EMBL" id="AP000944">
    <property type="status" value="NOT_ANNOTATED_CDS"/>
    <property type="molecule type" value="Genomic_DNA"/>
</dbReference>
<dbReference type="EMBL" id="CH471076">
    <property type="protein sequence ID" value="EAW74375.1"/>
    <property type="molecule type" value="Genomic_DNA"/>
</dbReference>
<dbReference type="EMBL" id="BC014889">
    <property type="protein sequence ID" value="AAH14889.1"/>
    <property type="molecule type" value="mRNA"/>
</dbReference>
<dbReference type="EMBL" id="U43920">
    <property type="protein sequence ID" value="AAC50687.1"/>
    <property type="molecule type" value="Genomic_DNA"/>
</dbReference>
<dbReference type="CCDS" id="CCDS8100.1">
    <molecule id="Q92785-1"/>
</dbReference>
<dbReference type="RefSeq" id="NP_006259.1">
    <molecule id="Q92785-1"/>
    <property type="nucleotide sequence ID" value="NM_006268.5"/>
</dbReference>
<dbReference type="PDB" id="3IUF">
    <property type="method" value="X-ray"/>
    <property type="resolution" value="1.80 A"/>
    <property type="chains" value="A=203-249"/>
</dbReference>
<dbReference type="PDB" id="5B79">
    <property type="method" value="X-ray"/>
    <property type="resolution" value="2.60 A"/>
    <property type="chains" value="A=270-391"/>
</dbReference>
<dbReference type="PDB" id="5VDC">
    <property type="method" value="X-ray"/>
    <property type="resolution" value="1.60 A"/>
    <property type="chains" value="A=270-391"/>
</dbReference>
<dbReference type="PDB" id="6LTH">
    <property type="method" value="EM"/>
    <property type="resolution" value="3.00 A"/>
    <property type="chains" value="R=1-391"/>
</dbReference>
<dbReference type="PDB" id="6LTJ">
    <property type="method" value="EM"/>
    <property type="resolution" value="3.70 A"/>
    <property type="chains" value="R=1-100, R=209-391"/>
</dbReference>
<dbReference type="PDBsum" id="3IUF"/>
<dbReference type="PDBsum" id="5B79"/>
<dbReference type="PDBsum" id="5VDC"/>
<dbReference type="PDBsum" id="6LTH"/>
<dbReference type="PDBsum" id="6LTJ"/>
<dbReference type="EMDB" id="EMD-0974"/>
<dbReference type="SMR" id="Q92785"/>
<dbReference type="BioGRID" id="111909">
    <property type="interactions" value="350"/>
</dbReference>
<dbReference type="ComplexPortal" id="CPX-1195">
    <property type="entry name" value="Embryonic stem cell-specific SWI/SNF ATP-dependent chromatin remodeling complex"/>
</dbReference>
<dbReference type="CORUM" id="Q92785"/>
<dbReference type="DIP" id="DIP-27575N"/>
<dbReference type="FunCoup" id="Q92785">
    <property type="interactions" value="3879"/>
</dbReference>
<dbReference type="IntAct" id="Q92785">
    <property type="interactions" value="123"/>
</dbReference>
<dbReference type="MINT" id="Q92785"/>
<dbReference type="STRING" id="9606.ENSP00000252268"/>
<dbReference type="GlyGen" id="Q92785">
    <property type="glycosylation" value="1 site, 1 O-linked glycan (1 site)"/>
</dbReference>
<dbReference type="iPTMnet" id="Q92785"/>
<dbReference type="PhosphoSitePlus" id="Q92785"/>
<dbReference type="SwissPalm" id="Q92785"/>
<dbReference type="BioMuta" id="DPF2"/>
<dbReference type="DMDM" id="2842711"/>
<dbReference type="jPOST" id="Q92785"/>
<dbReference type="MassIVE" id="Q92785"/>
<dbReference type="PaxDb" id="9606-ENSP00000436901"/>
<dbReference type="PeptideAtlas" id="Q92785"/>
<dbReference type="ProteomicsDB" id="5076"/>
<dbReference type="ProteomicsDB" id="75469">
    <molecule id="Q92785-1"/>
</dbReference>
<dbReference type="Pumba" id="Q92785"/>
<dbReference type="Antibodypedia" id="15846">
    <property type="antibodies" value="333 antibodies from 38 providers"/>
</dbReference>
<dbReference type="DNASU" id="5977"/>
<dbReference type="Ensembl" id="ENST00000415073.6">
    <molecule id="Q92785-2"/>
    <property type="protein sequence ID" value="ENSP00000399714.2"/>
    <property type="gene ID" value="ENSG00000133884.11"/>
</dbReference>
<dbReference type="Ensembl" id="ENST00000528416.6">
    <molecule id="Q92785-1"/>
    <property type="protein sequence ID" value="ENSP00000436901.1"/>
    <property type="gene ID" value="ENSG00000133884.11"/>
</dbReference>
<dbReference type="GeneID" id="5977"/>
<dbReference type="KEGG" id="hsa:5977"/>
<dbReference type="MANE-Select" id="ENST00000528416.6">
    <property type="protein sequence ID" value="ENSP00000436901.1"/>
    <property type="RefSeq nucleotide sequence ID" value="NM_006268.5"/>
    <property type="RefSeq protein sequence ID" value="NP_006259.1"/>
</dbReference>
<dbReference type="UCSC" id="uc001odm.4">
    <molecule id="Q92785-1"/>
    <property type="organism name" value="human"/>
</dbReference>
<dbReference type="AGR" id="HGNC:9964"/>
<dbReference type="CTD" id="5977"/>
<dbReference type="DisGeNET" id="5977"/>
<dbReference type="GeneCards" id="DPF2"/>
<dbReference type="GeneReviews" id="DPF2"/>
<dbReference type="HGNC" id="HGNC:9964">
    <property type="gene designation" value="DPF2"/>
</dbReference>
<dbReference type="HPA" id="ENSG00000133884">
    <property type="expression patterns" value="Low tissue specificity"/>
</dbReference>
<dbReference type="MalaCards" id="DPF2"/>
<dbReference type="MIM" id="601671">
    <property type="type" value="gene"/>
</dbReference>
<dbReference type="MIM" id="618027">
    <property type="type" value="phenotype"/>
</dbReference>
<dbReference type="neXtProt" id="NX_Q92785"/>
<dbReference type="OpenTargets" id="ENSG00000133884"/>
<dbReference type="Orphanet" id="1465">
    <property type="disease" value="Coffin-Siris syndrome"/>
</dbReference>
<dbReference type="PharmGKB" id="PA34331"/>
<dbReference type="VEuPathDB" id="HostDB:ENSG00000133884"/>
<dbReference type="eggNOG" id="KOG1244">
    <property type="taxonomic scope" value="Eukaryota"/>
</dbReference>
<dbReference type="GeneTree" id="ENSGT00940000155070"/>
<dbReference type="HOGENOM" id="CLU_038980_0_1_1"/>
<dbReference type="InParanoid" id="Q92785"/>
<dbReference type="OrthoDB" id="1903104at2759"/>
<dbReference type="PAN-GO" id="Q92785">
    <property type="GO annotations" value="6 GO annotations based on evolutionary models"/>
</dbReference>
<dbReference type="PhylomeDB" id="Q92785"/>
<dbReference type="TreeFam" id="TF318971"/>
<dbReference type="PathwayCommons" id="Q92785"/>
<dbReference type="Reactome" id="R-HSA-9824585">
    <property type="pathway name" value="Regulation of MITF-M-dependent genes involved in pigmentation"/>
</dbReference>
<dbReference type="Reactome" id="R-HSA-9845323">
    <property type="pathway name" value="Regulation of endogenous retroelements by Piwi-interacting RNAs (piRNAs)"/>
</dbReference>
<dbReference type="SignaLink" id="Q92785"/>
<dbReference type="SIGNOR" id="Q92785"/>
<dbReference type="BioGRID-ORCS" id="5977">
    <property type="hits" value="169 hits in 1184 CRISPR screens"/>
</dbReference>
<dbReference type="ChiTaRS" id="DPF2">
    <property type="organism name" value="human"/>
</dbReference>
<dbReference type="EvolutionaryTrace" id="Q92785"/>
<dbReference type="GeneWiki" id="DPF2"/>
<dbReference type="GenomeRNAi" id="5977"/>
<dbReference type="Pharos" id="Q92785">
    <property type="development level" value="Tbio"/>
</dbReference>
<dbReference type="PRO" id="PR:Q92785"/>
<dbReference type="Proteomes" id="UP000005640">
    <property type="component" value="Chromosome 11"/>
</dbReference>
<dbReference type="RNAct" id="Q92785">
    <property type="molecule type" value="protein"/>
</dbReference>
<dbReference type="Bgee" id="ENSG00000133884">
    <property type="expression patterns" value="Expressed in oocyte and 201 other cell types or tissues"/>
</dbReference>
<dbReference type="ExpressionAtlas" id="Q92785">
    <property type="expression patterns" value="baseline and differential"/>
</dbReference>
<dbReference type="GO" id="GO:0005813">
    <property type="term" value="C:centrosome"/>
    <property type="evidence" value="ECO:0000314"/>
    <property type="project" value="HPA"/>
</dbReference>
<dbReference type="GO" id="GO:0000785">
    <property type="term" value="C:chromatin"/>
    <property type="evidence" value="ECO:0000314"/>
    <property type="project" value="ARUK-UCL"/>
</dbReference>
<dbReference type="GO" id="GO:0005829">
    <property type="term" value="C:cytosol"/>
    <property type="evidence" value="ECO:0000314"/>
    <property type="project" value="HPA"/>
</dbReference>
<dbReference type="GO" id="GO:0043231">
    <property type="term" value="C:intracellular membrane-bounded organelle"/>
    <property type="evidence" value="ECO:0000314"/>
    <property type="project" value="HPA"/>
</dbReference>
<dbReference type="GO" id="GO:0071565">
    <property type="term" value="C:nBAF complex"/>
    <property type="evidence" value="ECO:0000318"/>
    <property type="project" value="GO_Central"/>
</dbReference>
<dbReference type="GO" id="GO:0005654">
    <property type="term" value="C:nucleoplasm"/>
    <property type="evidence" value="ECO:0000314"/>
    <property type="project" value="HPA"/>
</dbReference>
<dbReference type="GO" id="GO:0005634">
    <property type="term" value="C:nucleus"/>
    <property type="evidence" value="ECO:0000314"/>
    <property type="project" value="UniProtKB"/>
</dbReference>
<dbReference type="GO" id="GO:0016514">
    <property type="term" value="C:SWI/SNF complex"/>
    <property type="evidence" value="ECO:0000303"/>
    <property type="project" value="ComplexPortal"/>
</dbReference>
<dbReference type="GO" id="GO:0140015">
    <property type="term" value="F:histone H3K14ac reader activity"/>
    <property type="evidence" value="ECO:0000314"/>
    <property type="project" value="ARUK-UCL"/>
</dbReference>
<dbReference type="GO" id="GO:0140046">
    <property type="term" value="F:histone H4K16ac reader activity"/>
    <property type="evidence" value="ECO:0000314"/>
    <property type="project" value="ARUK-UCL"/>
</dbReference>
<dbReference type="GO" id="GO:0003714">
    <property type="term" value="F:transcription corepressor activity"/>
    <property type="evidence" value="ECO:0000304"/>
    <property type="project" value="ARUK-UCL"/>
</dbReference>
<dbReference type="GO" id="GO:0008270">
    <property type="term" value="F:zinc ion binding"/>
    <property type="evidence" value="ECO:0007669"/>
    <property type="project" value="UniProtKB-KW"/>
</dbReference>
<dbReference type="GO" id="GO:0006915">
    <property type="term" value="P:apoptotic process"/>
    <property type="evidence" value="ECO:0000304"/>
    <property type="project" value="ProtInc"/>
</dbReference>
<dbReference type="GO" id="GO:0097190">
    <property type="term" value="P:apoptotic signaling pathway"/>
    <property type="evidence" value="ECO:0000304"/>
    <property type="project" value="ProtInc"/>
</dbReference>
<dbReference type="GO" id="GO:0006338">
    <property type="term" value="P:chromatin remodeling"/>
    <property type="evidence" value="ECO:0000303"/>
    <property type="project" value="ComplexPortal"/>
</dbReference>
<dbReference type="GO" id="GO:1905454">
    <property type="term" value="P:negative regulation of myeloid progenitor cell differentiation"/>
    <property type="evidence" value="ECO:0000315"/>
    <property type="project" value="UniProtKB"/>
</dbReference>
<dbReference type="GO" id="GO:0000122">
    <property type="term" value="P:negative regulation of transcription by RNA polymerase II"/>
    <property type="evidence" value="ECO:0000304"/>
    <property type="project" value="ARUK-UCL"/>
</dbReference>
<dbReference type="GO" id="GO:0007399">
    <property type="term" value="P:nervous system development"/>
    <property type="evidence" value="ECO:0000318"/>
    <property type="project" value="GO_Central"/>
</dbReference>
<dbReference type="GO" id="GO:2000781">
    <property type="term" value="P:positive regulation of double-strand break repair"/>
    <property type="evidence" value="ECO:0000303"/>
    <property type="project" value="ComplexPortal"/>
</dbReference>
<dbReference type="GO" id="GO:1902459">
    <property type="term" value="P:positive regulation of stem cell population maintenance"/>
    <property type="evidence" value="ECO:0000303"/>
    <property type="project" value="ComplexPortal"/>
</dbReference>
<dbReference type="GO" id="GO:0070316">
    <property type="term" value="P:regulation of G0 to G1 transition"/>
    <property type="evidence" value="ECO:0000303"/>
    <property type="project" value="ComplexPortal"/>
</dbReference>
<dbReference type="GO" id="GO:2000045">
    <property type="term" value="P:regulation of G1/S transition of mitotic cell cycle"/>
    <property type="evidence" value="ECO:0000303"/>
    <property type="project" value="ComplexPortal"/>
</dbReference>
<dbReference type="GO" id="GO:0030071">
    <property type="term" value="P:regulation of mitotic metaphase/anaphase transition"/>
    <property type="evidence" value="ECO:0000303"/>
    <property type="project" value="ComplexPortal"/>
</dbReference>
<dbReference type="GO" id="GO:2000819">
    <property type="term" value="P:regulation of nucleotide-excision repair"/>
    <property type="evidence" value="ECO:0000303"/>
    <property type="project" value="ComplexPortal"/>
</dbReference>
<dbReference type="GO" id="GO:0006357">
    <property type="term" value="P:regulation of transcription by RNA polymerase II"/>
    <property type="evidence" value="ECO:0000303"/>
    <property type="project" value="ComplexPortal"/>
</dbReference>
<dbReference type="CDD" id="cd15691">
    <property type="entry name" value="PHD1_DPF2_like"/>
    <property type="match status" value="1"/>
</dbReference>
<dbReference type="CDD" id="cd15530">
    <property type="entry name" value="PHD2_d4"/>
    <property type="match status" value="1"/>
</dbReference>
<dbReference type="FunFam" id="3.30.160.60:FF:003699">
    <property type="entry name" value="D4, zinc and double PHD fingers family 1"/>
    <property type="match status" value="1"/>
</dbReference>
<dbReference type="FunFam" id="3.30.40.10:FF:000005">
    <property type="entry name" value="zinc finger protein isoform X1"/>
    <property type="match status" value="1"/>
</dbReference>
<dbReference type="Gene3D" id="3.30.160.60">
    <property type="entry name" value="Classic Zinc Finger"/>
    <property type="match status" value="1"/>
</dbReference>
<dbReference type="Gene3D" id="3.30.40.10">
    <property type="entry name" value="Zinc/RING finger domain, C3HC4 (zinc finger)"/>
    <property type="match status" value="1"/>
</dbReference>
<dbReference type="InterPro" id="IPR025750">
    <property type="entry name" value="DPF1-3_N"/>
</dbReference>
<dbReference type="InterPro" id="IPR036236">
    <property type="entry name" value="Znf_C2H2_sf"/>
</dbReference>
<dbReference type="InterPro" id="IPR013087">
    <property type="entry name" value="Znf_C2H2_type"/>
</dbReference>
<dbReference type="InterPro" id="IPR011011">
    <property type="entry name" value="Znf_FYVE_PHD"/>
</dbReference>
<dbReference type="InterPro" id="IPR001965">
    <property type="entry name" value="Znf_PHD"/>
</dbReference>
<dbReference type="InterPro" id="IPR019787">
    <property type="entry name" value="Znf_PHD-finger"/>
</dbReference>
<dbReference type="InterPro" id="IPR013083">
    <property type="entry name" value="Znf_RING/FYVE/PHD"/>
</dbReference>
<dbReference type="PANTHER" id="PTHR45888">
    <property type="entry name" value="HL01030P-RELATED"/>
    <property type="match status" value="1"/>
</dbReference>
<dbReference type="PANTHER" id="PTHR45888:SF7">
    <property type="entry name" value="ZINC FINGER PROTEIN UBI-D4"/>
    <property type="match status" value="1"/>
</dbReference>
<dbReference type="Pfam" id="PF14051">
    <property type="entry name" value="DPF1-3_N"/>
    <property type="match status" value="1"/>
</dbReference>
<dbReference type="Pfam" id="PF00628">
    <property type="entry name" value="PHD"/>
    <property type="match status" value="2"/>
</dbReference>
<dbReference type="SMART" id="SM00249">
    <property type="entry name" value="PHD"/>
    <property type="match status" value="2"/>
</dbReference>
<dbReference type="SMART" id="SM00355">
    <property type="entry name" value="ZnF_C2H2"/>
    <property type="match status" value="1"/>
</dbReference>
<dbReference type="SUPFAM" id="SSF57667">
    <property type="entry name" value="beta-beta-alpha zinc fingers"/>
    <property type="match status" value="1"/>
</dbReference>
<dbReference type="SUPFAM" id="SSF57903">
    <property type="entry name" value="FYVE/PHD zinc finger"/>
    <property type="match status" value="2"/>
</dbReference>
<dbReference type="PROSITE" id="PS01359">
    <property type="entry name" value="ZF_PHD_1"/>
    <property type="match status" value="1"/>
</dbReference>
<dbReference type="PROSITE" id="PS50016">
    <property type="entry name" value="ZF_PHD_2"/>
    <property type="match status" value="2"/>
</dbReference>
<dbReference type="PROSITE" id="PS00028">
    <property type="entry name" value="ZINC_FINGER_C2H2_1"/>
    <property type="match status" value="1"/>
</dbReference>
<dbReference type="PROSITE" id="PS50157">
    <property type="entry name" value="ZINC_FINGER_C2H2_2"/>
    <property type="match status" value="1"/>
</dbReference>
<proteinExistence type="evidence at protein level"/>
<keyword id="KW-0002">3D-structure</keyword>
<keyword id="KW-0007">Acetylation</keyword>
<keyword id="KW-0025">Alternative splicing</keyword>
<keyword id="KW-0053">Apoptosis</keyword>
<keyword id="KW-0156">Chromatin regulator</keyword>
<keyword id="KW-0963">Cytoplasm</keyword>
<keyword id="KW-0225">Disease variant</keyword>
<keyword id="KW-0991">Intellectual disability</keyword>
<keyword id="KW-1017">Isopeptide bond</keyword>
<keyword id="KW-0479">Metal-binding</keyword>
<keyword id="KW-0539">Nucleus</keyword>
<keyword id="KW-0597">Phosphoprotein</keyword>
<keyword id="KW-1267">Proteomics identification</keyword>
<keyword id="KW-1185">Reference proteome</keyword>
<keyword id="KW-0677">Repeat</keyword>
<keyword id="KW-0804">Transcription</keyword>
<keyword id="KW-0805">Transcription regulation</keyword>
<keyword id="KW-0832">Ubl conjugation</keyword>
<keyword id="KW-0862">Zinc</keyword>
<keyword id="KW-0863">Zinc-finger</keyword>
<accession>Q92785</accession>
<accession>A8K7C9</accession>
<accession>B4DT58</accession>